<name>GBX2_HUMAN</name>
<protein>
    <recommendedName>
        <fullName>Homeobox protein GBX-2</fullName>
    </recommendedName>
    <alternativeName>
        <fullName>Gastrulation and brain-specific homeobox protein 2</fullName>
    </alternativeName>
</protein>
<organism>
    <name type="scientific">Homo sapiens</name>
    <name type="common">Human</name>
    <dbReference type="NCBI Taxonomy" id="9606"/>
    <lineage>
        <taxon>Eukaryota</taxon>
        <taxon>Metazoa</taxon>
        <taxon>Chordata</taxon>
        <taxon>Craniata</taxon>
        <taxon>Vertebrata</taxon>
        <taxon>Euteleostomi</taxon>
        <taxon>Mammalia</taxon>
        <taxon>Eutheria</taxon>
        <taxon>Euarchontoglires</taxon>
        <taxon>Primates</taxon>
        <taxon>Haplorrhini</taxon>
        <taxon>Catarrhini</taxon>
        <taxon>Hominidae</taxon>
        <taxon>Homo</taxon>
    </lineage>
</organism>
<proteinExistence type="evidence at protein level"/>
<sequence length="348" mass="37348">MSAAFPPSLMMMQRPLGSSTAFSIDSLIGSPPQPSPGHFVYTGYPMFMPYRPVVLPPPPPPPPALPQAALQPALPPAHPHHQIPSLPTGFCSSLAQGMALTSTLMATLPGGFSASPQHQEAAAARKFAPQPLPGGGNFDKAEALQADAEDGKGFLAKEGSLLAFSAAETVQASLVGAVRGQGKDESKVEDDPKGKEESFSLESDVDYSSDDNLTGQAAHKEEDPGHALEETPPSSGAAGSTTSTGKNRRRRTAFTSEQLLELEKEFHCKKYLSLTERSQIAHALKLSEVQVKIWFQNRRAKWKRVKAGNANSKTGEPSRNPKIVVPIPVHVSRFAIRSQHQQLEQARP</sequence>
<feature type="chain" id="PRO_0000048880" description="Homeobox protein GBX-2">
    <location>
        <begin position="1"/>
        <end position="348"/>
    </location>
</feature>
<feature type="DNA-binding region" description="Homeobox" evidence="1">
    <location>
        <begin position="247"/>
        <end position="306"/>
    </location>
</feature>
<feature type="region of interest" description="Disordered" evidence="2">
    <location>
        <begin position="59"/>
        <end position="81"/>
    </location>
</feature>
<feature type="region of interest" description="Disordered" evidence="2">
    <location>
        <begin position="111"/>
        <end position="139"/>
    </location>
</feature>
<feature type="region of interest" description="Disordered" evidence="2">
    <location>
        <begin position="179"/>
        <end position="251"/>
    </location>
</feature>
<feature type="compositionally biased region" description="Basic and acidic residues" evidence="2">
    <location>
        <begin position="181"/>
        <end position="198"/>
    </location>
</feature>
<feature type="compositionally biased region" description="Basic and acidic residues" evidence="2">
    <location>
        <begin position="218"/>
        <end position="229"/>
    </location>
</feature>
<feature type="compositionally biased region" description="Low complexity" evidence="2">
    <location>
        <begin position="231"/>
        <end position="245"/>
    </location>
</feature>
<feature type="sequence conflict" description="In Ref. 1; AAC03241." evidence="3" ref="1">
    <original>LPPAHPHHQIPSLPTGFCSSLAQGMALTSTLMATLPGGFSASPQHQEAAAARKFAPQPLPGGGNFDKAEALQADAEDGKGFLAKEGSLLAFSAAETVQASLVGAVRGQGKDESKVEDDPKG</original>
    <variation>CRPHTLTTRSPACPQASAPAWRRAWRSPLRSWPRSPAASPRRPSTRRRQRPASSRRSRCPAAVTSTRRRRCRLTRRTAKASWPKRARCSPSPRPRRCRLRSSGLSEGKGKTSQRWKTTRS</variation>
    <location>
        <begin position="74"/>
        <end position="194"/>
    </location>
</feature>
<feature type="sequence conflict" description="In Ref. 6." evidence="3" ref="6">
    <original>QAAHKEEDPGHALEETPPSSGA</original>
    <variation>PGSSQGGRPGPRGGGDPAEQRR</variation>
    <location>
        <begin position="216"/>
        <end position="237"/>
    </location>
</feature>
<evidence type="ECO:0000255" key="1">
    <source>
        <dbReference type="PROSITE-ProRule" id="PRU00108"/>
    </source>
</evidence>
<evidence type="ECO:0000256" key="2">
    <source>
        <dbReference type="SAM" id="MobiDB-lite"/>
    </source>
</evidence>
<evidence type="ECO:0000305" key="3"/>
<keyword id="KW-0238">DNA-binding</keyword>
<keyword id="KW-0371">Homeobox</keyword>
<keyword id="KW-0539">Nucleus</keyword>
<keyword id="KW-1267">Proteomics identification</keyword>
<keyword id="KW-1185">Reference proteome</keyword>
<keyword id="KW-0804">Transcription</keyword>
<keyword id="KW-0805">Transcription regulation</keyword>
<comment type="function">
    <text>May act as a transcription factor for cell pluripotency and differentiation in the embryo.</text>
</comment>
<comment type="subcellular location">
    <subcellularLocation>
        <location evidence="3">Nucleus</location>
    </subcellularLocation>
</comment>
<dbReference type="EMBL" id="U31468">
    <property type="protein sequence ID" value="AAC03241.1"/>
    <property type="molecule type" value="Genomic_DNA"/>
</dbReference>
<dbReference type="EMBL" id="AF118452">
    <property type="protein sequence ID" value="AAD39907.1"/>
    <property type="molecule type" value="mRNA"/>
</dbReference>
<dbReference type="EMBL" id="AC079135">
    <property type="protein sequence ID" value="AAX93240.1"/>
    <property type="molecule type" value="Genomic_DNA"/>
</dbReference>
<dbReference type="EMBL" id="CH471063">
    <property type="protein sequence ID" value="EAW71084.1"/>
    <property type="molecule type" value="Genomic_DNA"/>
</dbReference>
<dbReference type="EMBL" id="BC137448">
    <property type="protein sequence ID" value="AAI37449.1"/>
    <property type="molecule type" value="mRNA"/>
</dbReference>
<dbReference type="EMBL" id="BC137449">
    <property type="protein sequence ID" value="AAI37450.1"/>
    <property type="molecule type" value="mRNA"/>
</dbReference>
<dbReference type="EMBL" id="U02080">
    <property type="protein sequence ID" value="AAA17406.1"/>
    <property type="molecule type" value="Genomic_DNA"/>
</dbReference>
<dbReference type="CCDS" id="CCDS2515.1"/>
<dbReference type="PIR" id="S39540">
    <property type="entry name" value="S39540"/>
</dbReference>
<dbReference type="RefSeq" id="NP_001476.2">
    <property type="nucleotide sequence ID" value="NM_001485.3"/>
</dbReference>
<dbReference type="RefSeq" id="XP_047299863.1">
    <property type="nucleotide sequence ID" value="XM_047443907.1"/>
</dbReference>
<dbReference type="RefSeq" id="XP_054197330.1">
    <property type="nucleotide sequence ID" value="XM_054341355.1"/>
</dbReference>
<dbReference type="SMR" id="P52951"/>
<dbReference type="BioGRID" id="108907">
    <property type="interactions" value="6"/>
</dbReference>
<dbReference type="FunCoup" id="P52951">
    <property type="interactions" value="1200"/>
</dbReference>
<dbReference type="IntAct" id="P52951">
    <property type="interactions" value="3"/>
</dbReference>
<dbReference type="STRING" id="9606.ENSP00000302251"/>
<dbReference type="iPTMnet" id="P52951"/>
<dbReference type="PhosphoSitePlus" id="P52951"/>
<dbReference type="BioMuta" id="GBX2"/>
<dbReference type="DMDM" id="12644308"/>
<dbReference type="jPOST" id="P52951"/>
<dbReference type="MassIVE" id="P52951"/>
<dbReference type="PaxDb" id="9606-ENSP00000302251"/>
<dbReference type="PeptideAtlas" id="P52951"/>
<dbReference type="ProteomicsDB" id="56561"/>
<dbReference type="Antibodypedia" id="20253">
    <property type="antibodies" value="322 antibodies from 34 providers"/>
</dbReference>
<dbReference type="DNASU" id="2637"/>
<dbReference type="Ensembl" id="ENST00000306318.5">
    <property type="protein sequence ID" value="ENSP00000302251.4"/>
    <property type="gene ID" value="ENSG00000168505.7"/>
</dbReference>
<dbReference type="GeneID" id="2637"/>
<dbReference type="KEGG" id="hsa:2637"/>
<dbReference type="MANE-Select" id="ENST00000306318.5">
    <property type="protein sequence ID" value="ENSP00000302251.4"/>
    <property type="RefSeq nucleotide sequence ID" value="NM_001485.4"/>
    <property type="RefSeq protein sequence ID" value="NP_001476.2"/>
</dbReference>
<dbReference type="UCSC" id="uc002vvw.2">
    <property type="organism name" value="human"/>
</dbReference>
<dbReference type="AGR" id="HGNC:4186"/>
<dbReference type="CTD" id="2637"/>
<dbReference type="DisGeNET" id="2637"/>
<dbReference type="GeneCards" id="GBX2"/>
<dbReference type="HGNC" id="HGNC:4186">
    <property type="gene designation" value="GBX2"/>
</dbReference>
<dbReference type="HPA" id="ENSG00000168505">
    <property type="expression patterns" value="Tissue enriched (brain)"/>
</dbReference>
<dbReference type="MIM" id="601135">
    <property type="type" value="gene"/>
</dbReference>
<dbReference type="neXtProt" id="NX_P52951"/>
<dbReference type="OpenTargets" id="ENSG00000168505"/>
<dbReference type="PharmGKB" id="PA28600"/>
<dbReference type="VEuPathDB" id="HostDB:ENSG00000168505"/>
<dbReference type="eggNOG" id="KOG0489">
    <property type="taxonomic scope" value="Eukaryota"/>
</dbReference>
<dbReference type="GeneTree" id="ENSGT00940000154365"/>
<dbReference type="HOGENOM" id="CLU_052189_0_0_1"/>
<dbReference type="InParanoid" id="P52951"/>
<dbReference type="OMA" id="EDECNRK"/>
<dbReference type="OrthoDB" id="6159439at2759"/>
<dbReference type="PAN-GO" id="P52951">
    <property type="GO annotations" value="5 GO annotations based on evolutionary models"/>
</dbReference>
<dbReference type="PhylomeDB" id="P52951"/>
<dbReference type="TreeFam" id="TF351530"/>
<dbReference type="PathwayCommons" id="P52951"/>
<dbReference type="Reactome" id="R-HSA-9823739">
    <property type="pathway name" value="Formation of the anterior neural plate"/>
</dbReference>
<dbReference type="Reactome" id="R-HSA-9832991">
    <property type="pathway name" value="Formation of the posterior neural plate"/>
</dbReference>
<dbReference type="Reactome" id="R-HSA-9834899">
    <property type="pathway name" value="Specification of the neural plate border"/>
</dbReference>
<dbReference type="BioGRID-ORCS" id="2637">
    <property type="hits" value="22 hits in 1174 CRISPR screens"/>
</dbReference>
<dbReference type="GeneWiki" id="GBX2"/>
<dbReference type="GenomeRNAi" id="2637"/>
<dbReference type="Pharos" id="P52951">
    <property type="development level" value="Tbio"/>
</dbReference>
<dbReference type="PRO" id="PR:P52951"/>
<dbReference type="Proteomes" id="UP000005640">
    <property type="component" value="Chromosome 2"/>
</dbReference>
<dbReference type="RNAct" id="P52951">
    <property type="molecule type" value="protein"/>
</dbReference>
<dbReference type="Bgee" id="ENSG00000168505">
    <property type="expression patterns" value="Expressed in primordial germ cell in gonad and 30 other cell types or tissues"/>
</dbReference>
<dbReference type="ExpressionAtlas" id="P52951">
    <property type="expression patterns" value="baseline and differential"/>
</dbReference>
<dbReference type="GO" id="GO:0000785">
    <property type="term" value="C:chromatin"/>
    <property type="evidence" value="ECO:0000247"/>
    <property type="project" value="NTNU_SB"/>
</dbReference>
<dbReference type="GO" id="GO:0005634">
    <property type="term" value="C:nucleus"/>
    <property type="evidence" value="ECO:0000318"/>
    <property type="project" value="GO_Central"/>
</dbReference>
<dbReference type="GO" id="GO:0001228">
    <property type="term" value="F:DNA-binding transcription activator activity, RNA polymerase II-specific"/>
    <property type="evidence" value="ECO:0007669"/>
    <property type="project" value="Ensembl"/>
</dbReference>
<dbReference type="GO" id="GO:0003700">
    <property type="term" value="F:DNA-binding transcription factor activity"/>
    <property type="evidence" value="ECO:0000304"/>
    <property type="project" value="ProtInc"/>
</dbReference>
<dbReference type="GO" id="GO:0000981">
    <property type="term" value="F:DNA-binding transcription factor activity, RNA polymerase II-specific"/>
    <property type="evidence" value="ECO:0000247"/>
    <property type="project" value="NTNU_SB"/>
</dbReference>
<dbReference type="GO" id="GO:0000979">
    <property type="term" value="F:RNA polymerase II core promoter sequence-specific DNA binding"/>
    <property type="evidence" value="ECO:0007669"/>
    <property type="project" value="Ensembl"/>
</dbReference>
<dbReference type="GO" id="GO:0000977">
    <property type="term" value="F:RNA polymerase II transcription regulatory region sequence-specific DNA binding"/>
    <property type="evidence" value="ECO:0000318"/>
    <property type="project" value="GO_Central"/>
</dbReference>
<dbReference type="GO" id="GO:0061629">
    <property type="term" value="F:RNA polymerase II-specific DNA-binding transcription factor binding"/>
    <property type="evidence" value="ECO:0007669"/>
    <property type="project" value="Ensembl"/>
</dbReference>
<dbReference type="GO" id="GO:1990837">
    <property type="term" value="F:sequence-specific double-stranded DNA binding"/>
    <property type="evidence" value="ECO:0000314"/>
    <property type="project" value="ARUK-UCL"/>
</dbReference>
<dbReference type="GO" id="GO:0048483">
    <property type="term" value="P:autonomic nervous system development"/>
    <property type="evidence" value="ECO:0007669"/>
    <property type="project" value="Ensembl"/>
</dbReference>
<dbReference type="GO" id="GO:0007411">
    <property type="term" value="P:axon guidance"/>
    <property type="evidence" value="ECO:0007669"/>
    <property type="project" value="Ensembl"/>
</dbReference>
<dbReference type="GO" id="GO:0001569">
    <property type="term" value="P:branching involved in blood vessel morphogenesis"/>
    <property type="evidence" value="ECO:0007669"/>
    <property type="project" value="Ensembl"/>
</dbReference>
<dbReference type="GO" id="GO:0021930">
    <property type="term" value="P:cerebellar granule cell precursor proliferation"/>
    <property type="evidence" value="ECO:0007669"/>
    <property type="project" value="Ensembl"/>
</dbReference>
<dbReference type="GO" id="GO:0021549">
    <property type="term" value="P:cerebellum development"/>
    <property type="evidence" value="ECO:0007669"/>
    <property type="project" value="Ensembl"/>
</dbReference>
<dbReference type="GO" id="GO:0021884">
    <property type="term" value="P:forebrain neuron development"/>
    <property type="evidence" value="ECO:0007669"/>
    <property type="project" value="Ensembl"/>
</dbReference>
<dbReference type="GO" id="GO:0042472">
    <property type="term" value="P:inner ear morphogenesis"/>
    <property type="evidence" value="ECO:0007669"/>
    <property type="project" value="Ensembl"/>
</dbReference>
<dbReference type="GO" id="GO:0021555">
    <property type="term" value="P:midbrain-hindbrain boundary morphogenesis"/>
    <property type="evidence" value="ECO:0007669"/>
    <property type="project" value="Ensembl"/>
</dbReference>
<dbReference type="GO" id="GO:0007399">
    <property type="term" value="P:nervous system development"/>
    <property type="evidence" value="ECO:0000304"/>
    <property type="project" value="ProtInc"/>
</dbReference>
<dbReference type="GO" id="GO:0001755">
    <property type="term" value="P:neural crest cell migration"/>
    <property type="evidence" value="ECO:0007669"/>
    <property type="project" value="Ensembl"/>
</dbReference>
<dbReference type="GO" id="GO:0051960">
    <property type="term" value="P:regulation of nervous system development"/>
    <property type="evidence" value="ECO:0000318"/>
    <property type="project" value="GO_Central"/>
</dbReference>
<dbReference type="GO" id="GO:0006357">
    <property type="term" value="P:regulation of transcription by RNA polymerase II"/>
    <property type="evidence" value="ECO:0000318"/>
    <property type="project" value="GO_Central"/>
</dbReference>
<dbReference type="GO" id="GO:0021568">
    <property type="term" value="P:rhombomere 2 development"/>
    <property type="evidence" value="ECO:0007669"/>
    <property type="project" value="Ensembl"/>
</dbReference>
<dbReference type="GO" id="GO:0021794">
    <property type="term" value="P:thalamus development"/>
    <property type="evidence" value="ECO:0007669"/>
    <property type="project" value="Ensembl"/>
</dbReference>
<dbReference type="CDD" id="cd00086">
    <property type="entry name" value="homeodomain"/>
    <property type="match status" value="1"/>
</dbReference>
<dbReference type="FunFam" id="1.10.10.60:FF:000248">
    <property type="entry name" value="Gastrulation brain homeobox 2"/>
    <property type="match status" value="1"/>
</dbReference>
<dbReference type="Gene3D" id="1.10.10.60">
    <property type="entry name" value="Homeodomain-like"/>
    <property type="match status" value="1"/>
</dbReference>
<dbReference type="InterPro" id="IPR042982">
    <property type="entry name" value="GBX-1/2"/>
</dbReference>
<dbReference type="InterPro" id="IPR001356">
    <property type="entry name" value="HD"/>
</dbReference>
<dbReference type="InterPro" id="IPR020479">
    <property type="entry name" value="HD_metazoa"/>
</dbReference>
<dbReference type="InterPro" id="IPR017970">
    <property type="entry name" value="Homeobox_CS"/>
</dbReference>
<dbReference type="InterPro" id="IPR009057">
    <property type="entry name" value="Homeodomain-like_sf"/>
</dbReference>
<dbReference type="PANTHER" id="PTHR24334">
    <property type="entry name" value="HOMEOBOX PROTEIN GBX"/>
    <property type="match status" value="1"/>
</dbReference>
<dbReference type="PANTHER" id="PTHR24334:SF3">
    <property type="entry name" value="HOMEOBOX PROTEIN GBX-2"/>
    <property type="match status" value="1"/>
</dbReference>
<dbReference type="Pfam" id="PF00046">
    <property type="entry name" value="Homeodomain"/>
    <property type="match status" value="1"/>
</dbReference>
<dbReference type="PRINTS" id="PR00024">
    <property type="entry name" value="HOMEOBOX"/>
</dbReference>
<dbReference type="SMART" id="SM00389">
    <property type="entry name" value="HOX"/>
    <property type="match status" value="1"/>
</dbReference>
<dbReference type="SUPFAM" id="SSF46689">
    <property type="entry name" value="Homeodomain-like"/>
    <property type="match status" value="1"/>
</dbReference>
<dbReference type="PROSITE" id="PS00027">
    <property type="entry name" value="HOMEOBOX_1"/>
    <property type="match status" value="1"/>
</dbReference>
<dbReference type="PROSITE" id="PS50071">
    <property type="entry name" value="HOMEOBOX_2"/>
    <property type="match status" value="1"/>
</dbReference>
<gene>
    <name type="primary">GBX2</name>
</gene>
<accession>P52951</accession>
<accession>B2RPH7</accession>
<accession>O43833</accession>
<accession>Q53RX5</accession>
<accession>Q9Y5Y1</accession>
<reference key="1">
    <citation type="journal article" date="1996" name="Genomics">
        <title>Characterization and sequence analysis of the human homeobox-containing gene GBX2.</title>
        <authorList>
            <person name="Lin X."/>
            <person name="Swaroop A."/>
            <person name="Vaccarino F.M."/>
            <person name="Murtha M.T."/>
            <person name="Haas M."/>
            <person name="Ji X."/>
            <person name="Ruddle F.H."/>
            <person name="Leckman J.F."/>
        </authorList>
    </citation>
    <scope>NUCLEOTIDE SEQUENCE [GENOMIC DNA]</scope>
    <source>
        <tissue>Brain</tissue>
    </source>
</reference>
<reference key="2">
    <citation type="submission" date="1999-01" db="EMBL/GenBank/DDBJ databases">
        <title>Enhanced GBX2 expression induces the growth of human prostate cancer cells via transcriptional stimulation of the interleukin-6 gene.</title>
        <authorList>
            <person name="Gao A.C."/>
            <person name="Lou W."/>
            <person name="Isaacs J.T."/>
        </authorList>
    </citation>
    <scope>NUCLEOTIDE SEQUENCE [MRNA]</scope>
</reference>
<reference key="3">
    <citation type="journal article" date="2005" name="Nature">
        <title>Generation and annotation of the DNA sequences of human chromosomes 2 and 4.</title>
        <authorList>
            <person name="Hillier L.W."/>
            <person name="Graves T.A."/>
            <person name="Fulton R.S."/>
            <person name="Fulton L.A."/>
            <person name="Pepin K.H."/>
            <person name="Minx P."/>
            <person name="Wagner-McPherson C."/>
            <person name="Layman D."/>
            <person name="Wylie K."/>
            <person name="Sekhon M."/>
            <person name="Becker M.C."/>
            <person name="Fewell G.A."/>
            <person name="Delehaunty K.D."/>
            <person name="Miner T.L."/>
            <person name="Nash W.E."/>
            <person name="Kremitzki C."/>
            <person name="Oddy L."/>
            <person name="Du H."/>
            <person name="Sun H."/>
            <person name="Bradshaw-Cordum H."/>
            <person name="Ali J."/>
            <person name="Carter J."/>
            <person name="Cordes M."/>
            <person name="Harris A."/>
            <person name="Isak A."/>
            <person name="van Brunt A."/>
            <person name="Nguyen C."/>
            <person name="Du F."/>
            <person name="Courtney L."/>
            <person name="Kalicki J."/>
            <person name="Ozersky P."/>
            <person name="Abbott S."/>
            <person name="Armstrong J."/>
            <person name="Belter E.A."/>
            <person name="Caruso L."/>
            <person name="Cedroni M."/>
            <person name="Cotton M."/>
            <person name="Davidson T."/>
            <person name="Desai A."/>
            <person name="Elliott G."/>
            <person name="Erb T."/>
            <person name="Fronick C."/>
            <person name="Gaige T."/>
            <person name="Haakenson W."/>
            <person name="Haglund K."/>
            <person name="Holmes A."/>
            <person name="Harkins R."/>
            <person name="Kim K."/>
            <person name="Kruchowski S.S."/>
            <person name="Strong C.M."/>
            <person name="Grewal N."/>
            <person name="Goyea E."/>
            <person name="Hou S."/>
            <person name="Levy A."/>
            <person name="Martinka S."/>
            <person name="Mead K."/>
            <person name="McLellan M.D."/>
            <person name="Meyer R."/>
            <person name="Randall-Maher J."/>
            <person name="Tomlinson C."/>
            <person name="Dauphin-Kohlberg S."/>
            <person name="Kozlowicz-Reilly A."/>
            <person name="Shah N."/>
            <person name="Swearengen-Shahid S."/>
            <person name="Snider J."/>
            <person name="Strong J.T."/>
            <person name="Thompson J."/>
            <person name="Yoakum M."/>
            <person name="Leonard S."/>
            <person name="Pearman C."/>
            <person name="Trani L."/>
            <person name="Radionenko M."/>
            <person name="Waligorski J.E."/>
            <person name="Wang C."/>
            <person name="Rock S.M."/>
            <person name="Tin-Wollam A.-M."/>
            <person name="Maupin R."/>
            <person name="Latreille P."/>
            <person name="Wendl M.C."/>
            <person name="Yang S.-P."/>
            <person name="Pohl C."/>
            <person name="Wallis J.W."/>
            <person name="Spieth J."/>
            <person name="Bieri T.A."/>
            <person name="Berkowicz N."/>
            <person name="Nelson J.O."/>
            <person name="Osborne J."/>
            <person name="Ding L."/>
            <person name="Meyer R."/>
            <person name="Sabo A."/>
            <person name="Shotland Y."/>
            <person name="Sinha P."/>
            <person name="Wohldmann P.E."/>
            <person name="Cook L.L."/>
            <person name="Hickenbotham M.T."/>
            <person name="Eldred J."/>
            <person name="Williams D."/>
            <person name="Jones T.A."/>
            <person name="She X."/>
            <person name="Ciccarelli F.D."/>
            <person name="Izaurralde E."/>
            <person name="Taylor J."/>
            <person name="Schmutz J."/>
            <person name="Myers R.M."/>
            <person name="Cox D.R."/>
            <person name="Huang X."/>
            <person name="McPherson J.D."/>
            <person name="Mardis E.R."/>
            <person name="Clifton S.W."/>
            <person name="Warren W.C."/>
            <person name="Chinwalla A.T."/>
            <person name="Eddy S.R."/>
            <person name="Marra M.A."/>
            <person name="Ovcharenko I."/>
            <person name="Furey T.S."/>
            <person name="Miller W."/>
            <person name="Eichler E.E."/>
            <person name="Bork P."/>
            <person name="Suyama M."/>
            <person name="Torrents D."/>
            <person name="Waterston R.H."/>
            <person name="Wilson R.K."/>
        </authorList>
    </citation>
    <scope>NUCLEOTIDE SEQUENCE [LARGE SCALE GENOMIC DNA]</scope>
</reference>
<reference key="4">
    <citation type="submission" date="2005-07" db="EMBL/GenBank/DDBJ databases">
        <authorList>
            <person name="Mural R.J."/>
            <person name="Istrail S."/>
            <person name="Sutton G.G."/>
            <person name="Florea L."/>
            <person name="Halpern A.L."/>
            <person name="Mobarry C.M."/>
            <person name="Lippert R."/>
            <person name="Walenz B."/>
            <person name="Shatkay H."/>
            <person name="Dew I."/>
            <person name="Miller J.R."/>
            <person name="Flanigan M.J."/>
            <person name="Edwards N.J."/>
            <person name="Bolanos R."/>
            <person name="Fasulo D."/>
            <person name="Halldorsson B.V."/>
            <person name="Hannenhalli S."/>
            <person name="Turner R."/>
            <person name="Yooseph S."/>
            <person name="Lu F."/>
            <person name="Nusskern D.R."/>
            <person name="Shue B.C."/>
            <person name="Zheng X.H."/>
            <person name="Zhong F."/>
            <person name="Delcher A.L."/>
            <person name="Huson D.H."/>
            <person name="Kravitz S.A."/>
            <person name="Mouchard L."/>
            <person name="Reinert K."/>
            <person name="Remington K.A."/>
            <person name="Clark A.G."/>
            <person name="Waterman M.S."/>
            <person name="Eichler E.E."/>
            <person name="Adams M.D."/>
            <person name="Hunkapiller M.W."/>
            <person name="Myers E.W."/>
            <person name="Venter J.C."/>
        </authorList>
    </citation>
    <scope>NUCLEOTIDE SEQUENCE [LARGE SCALE GENOMIC DNA]</scope>
</reference>
<reference key="5">
    <citation type="journal article" date="2004" name="Genome Res.">
        <title>The status, quality, and expansion of the NIH full-length cDNA project: the Mammalian Gene Collection (MGC).</title>
        <authorList>
            <consortium name="The MGC Project Team"/>
        </authorList>
    </citation>
    <scope>NUCLEOTIDE SEQUENCE [LARGE SCALE MRNA]</scope>
    <source>
        <tissue>Brain</tissue>
    </source>
</reference>
<reference key="6">
    <citation type="journal article" date="1993" name="FEBS Lett.">
        <title>The HOX complex neighbored by the EVX gene, as well as two other homeobox-containing genes, the GBX-class and the EN-class, are located on the same chromosomes 2 and 7 in humans.</title>
        <authorList>
            <person name="Matsui T."/>
            <person name="Hirai M."/>
            <person name="Hirano M."/>
            <person name="Kurosawa Y."/>
        </authorList>
    </citation>
    <scope>NUCLEOTIDE SEQUENCE [GENOMIC DNA] OF 216-348</scope>
</reference>